<feature type="chain" id="PRO_0000173188" description="Large ribosomal subunit protein bL31c">
    <location>
        <begin position="1"/>
        <end position="79"/>
    </location>
</feature>
<organism>
    <name type="scientific">Gracilaria tenuistipitata var. liui</name>
    <name type="common">Red alga</name>
    <dbReference type="NCBI Taxonomy" id="285951"/>
    <lineage>
        <taxon>Eukaryota</taxon>
        <taxon>Rhodophyta</taxon>
        <taxon>Florideophyceae</taxon>
        <taxon>Rhodymeniophycidae</taxon>
        <taxon>Gracilariales</taxon>
        <taxon>Gracilariaceae</taxon>
        <taxon>Gracilaria</taxon>
        <taxon>Gracilaria tenuistipitata</taxon>
    </lineage>
</organism>
<comment type="function">
    <text evidence="1">Binds the 23S rRNA.</text>
</comment>
<comment type="subunit">
    <text evidence="1">Part of the 50S ribosomal subunit.</text>
</comment>
<comment type="subcellular location">
    <subcellularLocation>
        <location>Plastid</location>
        <location>Chloroplast</location>
    </subcellularLocation>
</comment>
<comment type="similarity">
    <text evidence="1">Belongs to the bacterial ribosomal protein bL31 family. Type A subfamily.</text>
</comment>
<evidence type="ECO:0000255" key="1">
    <source>
        <dbReference type="HAMAP-Rule" id="MF_00501"/>
    </source>
</evidence>
<evidence type="ECO:0000305" key="2"/>
<dbReference type="EMBL" id="AY673996">
    <property type="protein sequence ID" value="AAT79658.1"/>
    <property type="molecule type" value="Genomic_DNA"/>
</dbReference>
<dbReference type="RefSeq" id="YP_063583.1">
    <property type="nucleotide sequence ID" value="NC_006137.1"/>
</dbReference>
<dbReference type="GeneID" id="2944104"/>
<dbReference type="GO" id="GO:0009507">
    <property type="term" value="C:chloroplast"/>
    <property type="evidence" value="ECO:0007669"/>
    <property type="project" value="UniProtKB-SubCell"/>
</dbReference>
<dbReference type="GO" id="GO:1990904">
    <property type="term" value="C:ribonucleoprotein complex"/>
    <property type="evidence" value="ECO:0007669"/>
    <property type="project" value="UniProtKB-KW"/>
</dbReference>
<dbReference type="GO" id="GO:0005840">
    <property type="term" value="C:ribosome"/>
    <property type="evidence" value="ECO:0007669"/>
    <property type="project" value="UniProtKB-KW"/>
</dbReference>
<dbReference type="GO" id="GO:0019843">
    <property type="term" value="F:rRNA binding"/>
    <property type="evidence" value="ECO:0007669"/>
    <property type="project" value="UniProtKB-KW"/>
</dbReference>
<dbReference type="GO" id="GO:0003735">
    <property type="term" value="F:structural constituent of ribosome"/>
    <property type="evidence" value="ECO:0007669"/>
    <property type="project" value="InterPro"/>
</dbReference>
<dbReference type="GO" id="GO:0006412">
    <property type="term" value="P:translation"/>
    <property type="evidence" value="ECO:0007669"/>
    <property type="project" value="UniProtKB-UniRule"/>
</dbReference>
<dbReference type="Gene3D" id="4.10.830.30">
    <property type="entry name" value="Ribosomal protein L31"/>
    <property type="match status" value="1"/>
</dbReference>
<dbReference type="HAMAP" id="MF_00501">
    <property type="entry name" value="Ribosomal_bL31_1"/>
    <property type="match status" value="1"/>
</dbReference>
<dbReference type="InterPro" id="IPR034704">
    <property type="entry name" value="Ribosomal_bL28/bL31-like_sf"/>
</dbReference>
<dbReference type="InterPro" id="IPR002150">
    <property type="entry name" value="Ribosomal_bL31"/>
</dbReference>
<dbReference type="InterPro" id="IPR027491">
    <property type="entry name" value="Ribosomal_bL31_A"/>
</dbReference>
<dbReference type="InterPro" id="IPR042105">
    <property type="entry name" value="Ribosomal_bL31_sf"/>
</dbReference>
<dbReference type="NCBIfam" id="TIGR00105">
    <property type="entry name" value="L31"/>
    <property type="match status" value="1"/>
</dbReference>
<dbReference type="NCBIfam" id="NF000612">
    <property type="entry name" value="PRK00019.1"/>
    <property type="match status" value="1"/>
</dbReference>
<dbReference type="NCBIfam" id="NF001809">
    <property type="entry name" value="PRK00528.1"/>
    <property type="match status" value="1"/>
</dbReference>
<dbReference type="PANTHER" id="PTHR33280">
    <property type="entry name" value="50S RIBOSOMAL PROTEIN L31, CHLOROPLASTIC"/>
    <property type="match status" value="1"/>
</dbReference>
<dbReference type="PANTHER" id="PTHR33280:SF1">
    <property type="entry name" value="LARGE RIBOSOMAL SUBUNIT PROTEIN BL31C"/>
    <property type="match status" value="1"/>
</dbReference>
<dbReference type="Pfam" id="PF01197">
    <property type="entry name" value="Ribosomal_L31"/>
    <property type="match status" value="1"/>
</dbReference>
<dbReference type="PRINTS" id="PR01249">
    <property type="entry name" value="RIBOSOMALL31"/>
</dbReference>
<dbReference type="SUPFAM" id="SSF143800">
    <property type="entry name" value="L28p-like"/>
    <property type="match status" value="1"/>
</dbReference>
<dbReference type="PROSITE" id="PS01143">
    <property type="entry name" value="RIBOSOMAL_L31"/>
    <property type="match status" value="1"/>
</dbReference>
<keyword id="KW-0150">Chloroplast</keyword>
<keyword id="KW-0934">Plastid</keyword>
<keyword id="KW-0687">Ribonucleoprotein</keyword>
<keyword id="KW-0689">Ribosomal protein</keyword>
<keyword id="KW-0694">RNA-binding</keyword>
<keyword id="KW-0699">rRNA-binding</keyword>
<sequence>MTQKSIHPKWFNDTKVYCDGKHVMTVGSTQAELHVDIWSGNHPFFTGSQRIIDTEGRVEKFMRKYNLQSNNDKQSKLEV</sequence>
<name>RK31_GRATL</name>
<geneLocation type="chloroplast"/>
<protein>
    <recommendedName>
        <fullName evidence="1">Large ribosomal subunit protein bL31c</fullName>
    </recommendedName>
    <alternativeName>
        <fullName evidence="2">50S ribosomal protein L31, chloroplastic</fullName>
    </alternativeName>
</protein>
<reference key="1">
    <citation type="journal article" date="2004" name="J. Mol. Evol.">
        <title>Comparative analysis of the complete plastid genome sequence of the red alga Gracilaria tenuistipitata var. liui provides insights into the evolution of rhodoplasts and their relationship to other plastids.</title>
        <authorList>
            <person name="Hagopian J.C."/>
            <person name="Reis M."/>
            <person name="Kitajima J.P."/>
            <person name="Bhattacharya D."/>
            <person name="de Oliveira M.C."/>
        </authorList>
    </citation>
    <scope>NUCLEOTIDE SEQUENCE [LARGE SCALE GENOMIC DNA]</scope>
</reference>
<gene>
    <name evidence="1" type="primary">rpl31</name>
    <name type="ordered locus">Grc000077</name>
</gene>
<proteinExistence type="inferred from homology"/>
<accession>Q6B8X7</accession>